<protein>
    <recommendedName>
        <fullName evidence="1">Ribosomal RNA small subunit methyltransferase G</fullName>
        <ecNumber evidence="1">2.1.1.-</ecNumber>
    </recommendedName>
    <alternativeName>
        <fullName evidence="1">16S rRNA 7-methylguanosine methyltransferase</fullName>
        <shortName evidence="1">16S rRNA m7G methyltransferase</shortName>
    </alternativeName>
    <alternativeName>
        <fullName>Glucose-inhibited division protein B</fullName>
    </alternativeName>
</protein>
<proteinExistence type="inferred from homology"/>
<evidence type="ECO:0000255" key="1">
    <source>
        <dbReference type="HAMAP-Rule" id="MF_00074"/>
    </source>
</evidence>
<organism>
    <name type="scientific">Treponema pallidum (strain Nichols)</name>
    <dbReference type="NCBI Taxonomy" id="243276"/>
    <lineage>
        <taxon>Bacteria</taxon>
        <taxon>Pseudomonadati</taxon>
        <taxon>Spirochaetota</taxon>
        <taxon>Spirochaetia</taxon>
        <taxon>Spirochaetales</taxon>
        <taxon>Treponemataceae</taxon>
        <taxon>Treponema</taxon>
    </lineage>
</organism>
<gene>
    <name evidence="1" type="primary">rsmG</name>
    <name type="synonym">gidB</name>
    <name type="ordered locus">TP_0946</name>
</gene>
<accession>O66106</accession>
<dbReference type="EC" id="2.1.1.-" evidence="1"/>
<dbReference type="EMBL" id="U97573">
    <property type="protein sequence ID" value="AAC08056.1"/>
    <property type="molecule type" value="Genomic_DNA"/>
</dbReference>
<dbReference type="EMBL" id="AE000520">
    <property type="protein sequence ID" value="AAC65903.1"/>
    <property type="molecule type" value="Genomic_DNA"/>
</dbReference>
<dbReference type="PIR" id="H71260">
    <property type="entry name" value="H71260"/>
</dbReference>
<dbReference type="RefSeq" id="WP_010882389.1">
    <property type="nucleotide sequence ID" value="NC_021490.2"/>
</dbReference>
<dbReference type="SMR" id="O66106"/>
<dbReference type="IntAct" id="O66106">
    <property type="interactions" value="27"/>
</dbReference>
<dbReference type="STRING" id="243276.TP_0946"/>
<dbReference type="EnsemblBacteria" id="AAC65903">
    <property type="protein sequence ID" value="AAC65903"/>
    <property type="gene ID" value="TP_0946"/>
</dbReference>
<dbReference type="GeneID" id="93876694"/>
<dbReference type="KEGG" id="tpa:TP_0946"/>
<dbReference type="KEGG" id="tpw:TPANIC_0946"/>
<dbReference type="eggNOG" id="COG0357">
    <property type="taxonomic scope" value="Bacteria"/>
</dbReference>
<dbReference type="HOGENOM" id="CLU_065341_2_0_12"/>
<dbReference type="OrthoDB" id="9808773at2"/>
<dbReference type="Proteomes" id="UP000000811">
    <property type="component" value="Chromosome"/>
</dbReference>
<dbReference type="GO" id="GO:0005829">
    <property type="term" value="C:cytosol"/>
    <property type="evidence" value="ECO:0007669"/>
    <property type="project" value="TreeGrafter"/>
</dbReference>
<dbReference type="GO" id="GO:0070043">
    <property type="term" value="F:rRNA (guanine-N7-)-methyltransferase activity"/>
    <property type="evidence" value="ECO:0007669"/>
    <property type="project" value="UniProtKB-UniRule"/>
</dbReference>
<dbReference type="CDD" id="cd02440">
    <property type="entry name" value="AdoMet_MTases"/>
    <property type="match status" value="1"/>
</dbReference>
<dbReference type="Gene3D" id="3.40.50.150">
    <property type="entry name" value="Vaccinia Virus protein VP39"/>
    <property type="match status" value="1"/>
</dbReference>
<dbReference type="HAMAP" id="MF_00074">
    <property type="entry name" value="16SrRNA_methyltr_G"/>
    <property type="match status" value="1"/>
</dbReference>
<dbReference type="InterPro" id="IPR003682">
    <property type="entry name" value="rRNA_ssu_MeTfrase_G"/>
</dbReference>
<dbReference type="InterPro" id="IPR029063">
    <property type="entry name" value="SAM-dependent_MTases_sf"/>
</dbReference>
<dbReference type="NCBIfam" id="TIGR00138">
    <property type="entry name" value="rsmG_gidB"/>
    <property type="match status" value="1"/>
</dbReference>
<dbReference type="PANTHER" id="PTHR31760">
    <property type="entry name" value="S-ADENOSYL-L-METHIONINE-DEPENDENT METHYLTRANSFERASES SUPERFAMILY PROTEIN"/>
    <property type="match status" value="1"/>
</dbReference>
<dbReference type="PANTHER" id="PTHR31760:SF0">
    <property type="entry name" value="S-ADENOSYL-L-METHIONINE-DEPENDENT METHYLTRANSFERASES SUPERFAMILY PROTEIN"/>
    <property type="match status" value="1"/>
</dbReference>
<dbReference type="Pfam" id="PF02527">
    <property type="entry name" value="GidB"/>
    <property type="match status" value="1"/>
</dbReference>
<dbReference type="PIRSF" id="PIRSF003078">
    <property type="entry name" value="GidB"/>
    <property type="match status" value="1"/>
</dbReference>
<dbReference type="SUPFAM" id="SSF53335">
    <property type="entry name" value="S-adenosyl-L-methionine-dependent methyltransferases"/>
    <property type="match status" value="1"/>
</dbReference>
<keyword id="KW-0963">Cytoplasm</keyword>
<keyword id="KW-0489">Methyltransferase</keyword>
<keyword id="KW-1185">Reference proteome</keyword>
<keyword id="KW-0698">rRNA processing</keyword>
<keyword id="KW-0949">S-adenosyl-L-methionine</keyword>
<keyword id="KW-0808">Transferase</keyword>
<reference key="1">
    <citation type="submission" date="1997-04" db="EMBL/GenBank/DDBJ databases">
        <authorList>
            <person name="Shevchenko D.V."/>
            <person name="Akins D.R."/>
            <person name="Radolf J.D."/>
        </authorList>
    </citation>
    <scope>NUCLEOTIDE SEQUENCE [GENOMIC DNA]</scope>
</reference>
<reference key="2">
    <citation type="journal article" date="1998" name="Science">
        <title>Complete genome sequence of Treponema pallidum, the syphilis spirochete.</title>
        <authorList>
            <person name="Fraser C.M."/>
            <person name="Norris S.J."/>
            <person name="Weinstock G.M."/>
            <person name="White O."/>
            <person name="Sutton G.G."/>
            <person name="Dodson R.J."/>
            <person name="Gwinn M.L."/>
            <person name="Hickey E.K."/>
            <person name="Clayton R.A."/>
            <person name="Ketchum K.A."/>
            <person name="Sodergren E."/>
            <person name="Hardham J.M."/>
            <person name="McLeod M.P."/>
            <person name="Salzberg S.L."/>
            <person name="Peterson J.D."/>
            <person name="Khalak H.G."/>
            <person name="Richardson D.L."/>
            <person name="Howell J.K."/>
            <person name="Chidambaram M."/>
            <person name="Utterback T.R."/>
            <person name="McDonald L.A."/>
            <person name="Artiach P."/>
            <person name="Bowman C."/>
            <person name="Cotton M.D."/>
            <person name="Fujii C."/>
            <person name="Garland S.A."/>
            <person name="Hatch B."/>
            <person name="Horst K."/>
            <person name="Roberts K.M."/>
            <person name="Sandusky M."/>
            <person name="Weidman J.F."/>
            <person name="Smith H.O."/>
            <person name="Venter J.C."/>
        </authorList>
    </citation>
    <scope>NUCLEOTIDE SEQUENCE [LARGE SCALE GENOMIC DNA]</scope>
    <source>
        <strain>Nichols</strain>
    </source>
</reference>
<feature type="chain" id="PRO_0000184360" description="Ribosomal RNA small subunit methyltransferase G">
    <location>
        <begin position="1"/>
        <end position="222"/>
    </location>
</feature>
<feature type="binding site" evidence="1">
    <location>
        <position position="80"/>
    </location>
    <ligand>
        <name>S-adenosyl-L-methionine</name>
        <dbReference type="ChEBI" id="CHEBI:59789"/>
    </ligand>
</feature>
<feature type="binding site" evidence="1">
    <location>
        <position position="85"/>
    </location>
    <ligand>
        <name>S-adenosyl-L-methionine</name>
        <dbReference type="ChEBI" id="CHEBI:59789"/>
    </ligand>
</feature>
<feature type="binding site" evidence="1">
    <location>
        <position position="149"/>
    </location>
    <ligand>
        <name>S-adenosyl-L-methionine</name>
        <dbReference type="ChEBI" id="CHEBI:59789"/>
    </ligand>
</feature>
<name>RSMG_TREPA</name>
<comment type="function">
    <text evidence="1">Specifically methylates the N7 position of a guanine in 16S rRNA.</text>
</comment>
<comment type="subcellular location">
    <subcellularLocation>
        <location evidence="1">Cytoplasm</location>
    </subcellularLocation>
</comment>
<comment type="similarity">
    <text evidence="1">Belongs to the methyltransferase superfamily. RNA methyltransferase RsmG family.</text>
</comment>
<sequence>MVTPSQHALLAEGVAHLTDARTAPALCALLKQYLEELILFNTRAHLVHVTHTEELITHHLLDSLSAWPHFTNARAIADIGSGAGLPGIPLACALALYAPETELTLIERREKRIAFLENACARLALPHLRIVHADAHDLTPYTYDAITFRALCPLNHPTVYMLLNKLRPGGVILAYKGKRKLIEQETRDFLPQSCSVFPLHVPFLHEARHLVAIHTPCAAPPQ</sequence>